<proteinExistence type="evidence at transcript level"/>
<feature type="chain" id="PRO_0000299388" description="OCIA domain-containing protein 1">
    <location>
        <begin position="1"/>
        <end position="254"/>
    </location>
</feature>
<feature type="domain" description="OCIA">
    <location>
        <begin position="1"/>
        <end position="114"/>
    </location>
</feature>
<feature type="region of interest" description="Disordered" evidence="2">
    <location>
        <begin position="1"/>
        <end position="28"/>
    </location>
</feature>
<feature type="region of interest" description="Disordered" evidence="2">
    <location>
        <begin position="124"/>
        <end position="254"/>
    </location>
</feature>
<feature type="compositionally biased region" description="Polar residues" evidence="2">
    <location>
        <begin position="124"/>
        <end position="141"/>
    </location>
</feature>
<feature type="compositionally biased region" description="Low complexity" evidence="2">
    <location>
        <begin position="157"/>
        <end position="168"/>
    </location>
</feature>
<feature type="compositionally biased region" description="Polar residues" evidence="2">
    <location>
        <begin position="169"/>
        <end position="186"/>
    </location>
</feature>
<feature type="compositionally biased region" description="Basic and acidic residues" evidence="2">
    <location>
        <begin position="199"/>
        <end position="219"/>
    </location>
</feature>
<feature type="compositionally biased region" description="Basic and acidic residues" evidence="2">
    <location>
        <begin position="234"/>
        <end position="247"/>
    </location>
</feature>
<name>OCAD1_XENTR</name>
<protein>
    <recommendedName>
        <fullName>OCIA domain-containing protein 1</fullName>
    </recommendedName>
</protein>
<comment type="subcellular location">
    <subcellularLocation>
        <location evidence="1">Endosome</location>
    </subcellularLocation>
</comment>
<comment type="similarity">
    <text evidence="3">Belongs to the OCIAD1 family.</text>
</comment>
<evidence type="ECO:0000250" key="1"/>
<evidence type="ECO:0000256" key="2">
    <source>
        <dbReference type="SAM" id="MobiDB-lite"/>
    </source>
</evidence>
<evidence type="ECO:0000305" key="3"/>
<dbReference type="EMBL" id="CR761274">
    <property type="protein sequence ID" value="CAJ83710.1"/>
    <property type="molecule type" value="mRNA"/>
</dbReference>
<dbReference type="RefSeq" id="NP_001039167.1">
    <property type="nucleotide sequence ID" value="NM_001045702.1"/>
</dbReference>
<dbReference type="FunCoup" id="Q28GQ3">
    <property type="interactions" value="2317"/>
</dbReference>
<dbReference type="STRING" id="8364.ENSXETP00000048242"/>
<dbReference type="PaxDb" id="8364-ENSXETP00000025532"/>
<dbReference type="GeneID" id="733998"/>
<dbReference type="KEGG" id="xtr:733998"/>
<dbReference type="AGR" id="Xenbase:XB-GENE-985483"/>
<dbReference type="CTD" id="54940"/>
<dbReference type="Xenbase" id="XB-GENE-985483">
    <property type="gene designation" value="ociad1"/>
</dbReference>
<dbReference type="eggNOG" id="ENOG502RXQR">
    <property type="taxonomic scope" value="Eukaryota"/>
</dbReference>
<dbReference type="InParanoid" id="Q28GQ3"/>
<dbReference type="OMA" id="TYEVMLP"/>
<dbReference type="OrthoDB" id="6513616at2759"/>
<dbReference type="Proteomes" id="UP000008143">
    <property type="component" value="Chromosome 1"/>
</dbReference>
<dbReference type="GO" id="GO:0005768">
    <property type="term" value="C:endosome"/>
    <property type="evidence" value="ECO:0007669"/>
    <property type="project" value="UniProtKB-SubCell"/>
</dbReference>
<dbReference type="InterPro" id="IPR040187">
    <property type="entry name" value="OCAD1/2"/>
</dbReference>
<dbReference type="InterPro" id="IPR009764">
    <property type="entry name" value="OCIA_dom"/>
</dbReference>
<dbReference type="PANTHER" id="PTHR13336:SF4">
    <property type="entry name" value="OCIA DOMAIN-CONTAINING PROTEIN 1"/>
    <property type="match status" value="1"/>
</dbReference>
<dbReference type="PANTHER" id="PTHR13336">
    <property type="entry name" value="OVARIAN CARCINOMA IMMUNOREACTIVE ANTIGEN"/>
    <property type="match status" value="1"/>
</dbReference>
<dbReference type="Pfam" id="PF07051">
    <property type="entry name" value="OCIA"/>
    <property type="match status" value="1"/>
</dbReference>
<gene>
    <name type="primary">ociad1</name>
    <name type="ORF">TEgg067j10.1</name>
</gene>
<organism>
    <name type="scientific">Xenopus tropicalis</name>
    <name type="common">Western clawed frog</name>
    <name type="synonym">Silurana tropicalis</name>
    <dbReference type="NCBI Taxonomy" id="8364"/>
    <lineage>
        <taxon>Eukaryota</taxon>
        <taxon>Metazoa</taxon>
        <taxon>Chordata</taxon>
        <taxon>Craniata</taxon>
        <taxon>Vertebrata</taxon>
        <taxon>Euteleostomi</taxon>
        <taxon>Amphibia</taxon>
        <taxon>Batrachia</taxon>
        <taxon>Anura</taxon>
        <taxon>Pipoidea</taxon>
        <taxon>Pipidae</taxon>
        <taxon>Xenopodinae</taxon>
        <taxon>Xenopus</taxon>
        <taxon>Silurana</taxon>
    </lineage>
</organism>
<sequence length="254" mass="27966">MAPSPAEFSDQQQPAPHRTVQPPGVGYIPTDDERRVFRECNEESFWYRSLPISAVSMIVTQGLISRGILTTSSRFGSLPKVAFAGLCGYLAGKVSYMKTCQEKFKRLENSPLGEALRQGYRNIPTQYPSGTSEFSDVNPKTASPADGFASNVVEPPSSVYSSHHNSTSDTVPFSTSLGESSPSGISDNIAPEPAALLEDTPKRKPMTYDELRSRNRETYEMAVTQRADAPVRSSLDRAARKDVKTNKYGDVWEE</sequence>
<keyword id="KW-0967">Endosome</keyword>
<keyword id="KW-1185">Reference proteome</keyword>
<accession>Q28GQ3</accession>
<reference key="1">
    <citation type="submission" date="2006-10" db="EMBL/GenBank/DDBJ databases">
        <authorList>
            <consortium name="Sanger Xenopus tropicalis EST/cDNA project"/>
        </authorList>
    </citation>
    <scope>NUCLEOTIDE SEQUENCE [LARGE SCALE MRNA]</scope>
    <source>
        <tissue>Egg</tissue>
    </source>
</reference>